<feature type="signal peptide" evidence="4">
    <location>
        <begin position="1"/>
        <end position="23"/>
    </location>
</feature>
<feature type="chain" id="PRO_0000227501" description="Interleukin-17A">
    <location>
        <begin position="24"/>
        <end position="153"/>
    </location>
</feature>
<feature type="glycosylation site" description="N-linked (GlcNAc...) asparagine" evidence="4">
    <location>
        <position position="53"/>
    </location>
</feature>
<feature type="disulfide bond" evidence="1">
    <location>
        <begin position="92"/>
        <end position="142"/>
    </location>
</feature>
<feature type="disulfide bond" evidence="1">
    <location>
        <begin position="97"/>
        <end position="144"/>
    </location>
</feature>
<protein>
    <recommendedName>
        <fullName>Interleukin-17A</fullName>
        <shortName>IL-17</shortName>
        <shortName>IL-17A</shortName>
    </recommendedName>
</protein>
<gene>
    <name type="primary">IL17A</name>
    <name type="synonym">IL17</name>
</gene>
<organism>
    <name type="scientific">Sus scrofa</name>
    <name type="common">Pig</name>
    <dbReference type="NCBI Taxonomy" id="9823"/>
    <lineage>
        <taxon>Eukaryota</taxon>
        <taxon>Metazoa</taxon>
        <taxon>Chordata</taxon>
        <taxon>Craniata</taxon>
        <taxon>Vertebrata</taxon>
        <taxon>Euteleostomi</taxon>
        <taxon>Mammalia</taxon>
        <taxon>Eutheria</taxon>
        <taxon>Laurasiatheria</taxon>
        <taxon>Artiodactyla</taxon>
        <taxon>Suina</taxon>
        <taxon>Suidae</taxon>
        <taxon>Sus</taxon>
    </lineage>
</organism>
<comment type="function">
    <text evidence="3">Effector cytokine of innate and adaptive immune system involved in antimicrobial host defense and maintenance of tissue integrity. Signals via IL17RA-IL17RC heterodimeric receptor complex, triggering homotypic interaction of IL17RA and IL17RC chains with TRAF3IP2 adapter. This leads to downstream TRAF6-mediated activation of NF-kappa-B and MAPkinase pathways ultimately resulting in transcriptional activation of cytokines, chemokines, antimicrobial peptides and matrix metalloproteinases, with potential strong immune inflammation. Plays an important role in connecting T cell-mediated adaptive immunity and acute inflammatory response to destroy extracellular bacteria and fungi. As a signature effector cytokine of T-helper 17 cells (Th17), primarily induces neutrophil activation and recruitment at infection and inflammatory sites. In airway epithelium, mediates neutrophil chemotaxis via induction of CXCL1 and CXCL5 chemokines. In secondary lymphoid organs, contributes to germinal center formation by regulating the chemotactic response of B cells to CXCL12 and CXCL13, enhancing retention of B cells within the germinal centers, B cell somatic hypermutation rate and selection toward plasma cells. Effector cytokine of a subset of gamma-delta T cells that functions as part of an inflammatory circuit downstream IL1B, TLR2 and IL23A-IL12B to promote neutrophil recruitment for efficient bacterial clearance. Effector cytokine of innate immune cells including invariant natural killer cell (iNKT) and group 3 innate lymphoid cells that mediate initial neutrophilic inflammation. Involved in the maintenance of the integrity of epithelial barriers during homeostasis and pathogen infection. Upon acute injury, has a direct role in epithelial barrier formation by regulating OCLN localization and tight junction biogenesis. As part of the mucosal immune response induced by commensal bacteria, enhances host's ability to resist pathogenic bacterial and fungal infections by promoting neutrophil recruitment and antimicrobial peptides release. In synergy with IL17F, mediates the production of antimicrobial beta-defensins DEFB1, DEFB103A, and DEFB104A by mucosal epithelial cells, limiting the entry of microbes through the epithelial barriers. Involved in antiviral host defense through various mechanisms. Enhances immunity against West Nile virus by promoting T cell cytotoxicity. May play a beneficial role in influenza A virus (H5N1) infection by enhancing B cell recruitment and immune response in the lung. Contributes to influenza A virus (H1N1) clearance by driving the differentiation of B-1a B cells, providing for production of virus-specific IgM antibodies at first line of host defense.</text>
</comment>
<comment type="subunit">
    <text evidence="2">Homodimer. Forms complexes with IL17RA and IL17RC receptors with 2:1 binding stoichiometry: two receptor chains for one interleukin molecule. IL17A homodimer preferentially drives the formation of IL17RA-IL17RC heterodimeric receptor complex. IL17A homodimer adopts an asymmetrical ternary structure with one IL17RA molecule, allowing for high affinity interactions of one IL17A monomer with one IL17RA molecule (via D1 and D2 domains), while disfavoring binding of a second IL17RA molecule on the other IL17A monomer. Heterodimer with IL17F. IL17A-IL17F forms complexes with IL17RA-IL17RC, but with lower affinity when compared to IL17A homodimer. IL17RA and IL17RC chains cannot distinguish between IL17A and IL17F molecules, potentially enabling the formation of topologically distinct complexes.</text>
</comment>
<comment type="subcellular location">
    <subcellularLocation>
        <location evidence="3">Secreted</location>
    </subcellularLocation>
</comment>
<comment type="tissue specificity">
    <text evidence="5">Highly expressed in adult heart, skin, and intestinal tissues, such as jejunum and ileum.</text>
</comment>
<comment type="similarity">
    <text evidence="6">Belongs to the IL-17 family.</text>
</comment>
<proteinExistence type="evidence at transcript level"/>
<evidence type="ECO:0000250" key="1"/>
<evidence type="ECO:0000250" key="2">
    <source>
        <dbReference type="UniProtKB" id="Q16552"/>
    </source>
</evidence>
<evidence type="ECO:0000250" key="3">
    <source>
        <dbReference type="UniProtKB" id="Q62386"/>
    </source>
</evidence>
<evidence type="ECO:0000255" key="4"/>
<evidence type="ECO:0000269" key="5">
    <source>
    </source>
</evidence>
<evidence type="ECO:0000305" key="6"/>
<accession>Q60I29</accession>
<sequence>MTPVRSSSLSLLLLLSLVALVKAGIMIPQSPGCPKTEDKNFPQHVRVNLNILNRSTPARRPSDYSKRFTSPWTLQRNEDPERYSSVIWEAKCSHSGCINAEGKEDHHMNSVPIQQEILVLRREPRHCPNSFRLEKVMVTVGCTCVTPIVRHIS</sequence>
<dbReference type="EMBL" id="AB102693">
    <property type="protein sequence ID" value="BAD52431.1"/>
    <property type="molecule type" value="mRNA"/>
</dbReference>
<dbReference type="RefSeq" id="NP_001005729.1">
    <property type="nucleotide sequence ID" value="NM_001005729.1"/>
</dbReference>
<dbReference type="SMR" id="Q60I29"/>
<dbReference type="FunCoup" id="Q60I29">
    <property type="interactions" value="99"/>
</dbReference>
<dbReference type="STRING" id="9823.ENSSSCP00000001905"/>
<dbReference type="GlyCosmos" id="Q60I29">
    <property type="glycosylation" value="1 site, No reported glycans"/>
</dbReference>
<dbReference type="GlyGen" id="Q60I29">
    <property type="glycosylation" value="1 site"/>
</dbReference>
<dbReference type="PaxDb" id="9823-ENSSSCP00000001905"/>
<dbReference type="GeneID" id="449530"/>
<dbReference type="KEGG" id="ssc:449530"/>
<dbReference type="CTD" id="3605"/>
<dbReference type="eggNOG" id="ENOG502S5A0">
    <property type="taxonomic scope" value="Eukaryota"/>
</dbReference>
<dbReference type="InParanoid" id="Q60I29"/>
<dbReference type="OrthoDB" id="6093351at2759"/>
<dbReference type="Proteomes" id="UP000008227">
    <property type="component" value="Unplaced"/>
</dbReference>
<dbReference type="Proteomes" id="UP000314985">
    <property type="component" value="Unplaced"/>
</dbReference>
<dbReference type="Proteomes" id="UP000694570">
    <property type="component" value="Unplaced"/>
</dbReference>
<dbReference type="Proteomes" id="UP000694571">
    <property type="component" value="Unplaced"/>
</dbReference>
<dbReference type="Proteomes" id="UP000694720">
    <property type="component" value="Unplaced"/>
</dbReference>
<dbReference type="Proteomes" id="UP000694722">
    <property type="component" value="Unplaced"/>
</dbReference>
<dbReference type="Proteomes" id="UP000694723">
    <property type="component" value="Unplaced"/>
</dbReference>
<dbReference type="Proteomes" id="UP000694724">
    <property type="component" value="Unplaced"/>
</dbReference>
<dbReference type="Proteomes" id="UP000694725">
    <property type="component" value="Unplaced"/>
</dbReference>
<dbReference type="Proteomes" id="UP000694726">
    <property type="component" value="Unplaced"/>
</dbReference>
<dbReference type="Proteomes" id="UP000694727">
    <property type="component" value="Unplaced"/>
</dbReference>
<dbReference type="Proteomes" id="UP000694728">
    <property type="component" value="Unplaced"/>
</dbReference>
<dbReference type="GO" id="GO:0005615">
    <property type="term" value="C:extracellular space"/>
    <property type="evidence" value="ECO:0007669"/>
    <property type="project" value="UniProtKB-KW"/>
</dbReference>
<dbReference type="GO" id="GO:0005125">
    <property type="term" value="F:cytokine activity"/>
    <property type="evidence" value="ECO:0007669"/>
    <property type="project" value="UniProtKB-KW"/>
</dbReference>
<dbReference type="GO" id="GO:0002250">
    <property type="term" value="P:adaptive immune response"/>
    <property type="evidence" value="ECO:0007669"/>
    <property type="project" value="UniProtKB-KW"/>
</dbReference>
<dbReference type="GO" id="GO:0006954">
    <property type="term" value="P:inflammatory response"/>
    <property type="evidence" value="ECO:0007669"/>
    <property type="project" value="UniProtKB-KW"/>
</dbReference>
<dbReference type="GO" id="GO:0045087">
    <property type="term" value="P:innate immune response"/>
    <property type="evidence" value="ECO:0007669"/>
    <property type="project" value="UniProtKB-KW"/>
</dbReference>
<dbReference type="FunFam" id="2.10.90.10:FF:000038">
    <property type="entry name" value="Interleukin-17A"/>
    <property type="match status" value="1"/>
</dbReference>
<dbReference type="Gene3D" id="2.10.90.10">
    <property type="entry name" value="Cystine-knot cytokines"/>
    <property type="match status" value="1"/>
</dbReference>
<dbReference type="InterPro" id="IPR029034">
    <property type="entry name" value="Cystine-knot_cytokine"/>
</dbReference>
<dbReference type="InterPro" id="IPR020440">
    <property type="entry name" value="IL-17_chr"/>
</dbReference>
<dbReference type="InterPro" id="IPR010345">
    <property type="entry name" value="IL-17_fam"/>
</dbReference>
<dbReference type="Pfam" id="PF06083">
    <property type="entry name" value="IL17"/>
    <property type="match status" value="1"/>
</dbReference>
<dbReference type="PRINTS" id="PR01932">
    <property type="entry name" value="INTRLEUKIN17"/>
</dbReference>
<dbReference type="SUPFAM" id="SSF57501">
    <property type="entry name" value="Cystine-knot cytokines"/>
    <property type="match status" value="1"/>
</dbReference>
<reference key="1">
    <citation type="journal article" date="2004" name="J. Interferon Cytokine Res.">
        <title>Cloning and characterization of swine interleukin-17, preferentially expressed in the intestines.</title>
        <authorList>
            <person name="Katoh S."/>
            <person name="Kitazawa H."/>
            <person name="Shimosato T."/>
            <person name="Tohno M."/>
            <person name="Kawai Y."/>
            <person name="Saito T."/>
        </authorList>
    </citation>
    <scope>NUCLEOTIDE SEQUENCE [MRNA]</scope>
    <scope>TISSUE SPECIFICITY</scope>
    <source>
        <tissue>Thymus</tissue>
    </source>
</reference>
<name>IL17_PIG</name>
<keyword id="KW-1064">Adaptive immunity</keyword>
<keyword id="KW-0202">Cytokine</keyword>
<keyword id="KW-1015">Disulfide bond</keyword>
<keyword id="KW-0325">Glycoprotein</keyword>
<keyword id="KW-0391">Immunity</keyword>
<keyword id="KW-0395">Inflammatory response</keyword>
<keyword id="KW-0399">Innate immunity</keyword>
<keyword id="KW-1185">Reference proteome</keyword>
<keyword id="KW-0964">Secreted</keyword>
<keyword id="KW-0732">Signal</keyword>